<proteinExistence type="evidence at transcript level"/>
<accession>B7ZS37</accession>
<accession>Q6YI94</accession>
<feature type="chain" id="PRO_0000383149" description="Bromodomain adjacent to zinc finger domain protein 2A">
    <location>
        <begin position="1"/>
        <end position="1698"/>
    </location>
</feature>
<feature type="domain" description="MBD" evidence="6">
    <location>
        <begin position="418"/>
        <end position="489"/>
    </location>
</feature>
<feature type="domain" description="DDT" evidence="4">
    <location>
        <begin position="701"/>
        <end position="766"/>
    </location>
</feature>
<feature type="domain" description="Bromo" evidence="3">
    <location>
        <begin position="1585"/>
        <end position="1689"/>
    </location>
</feature>
<feature type="DNA-binding region" description="A.T hook 1">
    <location>
        <begin position="541"/>
        <end position="553"/>
    </location>
</feature>
<feature type="DNA-binding region" description="A.T hook 2">
    <location>
        <begin position="541"/>
        <end position="553"/>
    </location>
</feature>
<feature type="DNA-binding region" description="A.T hook 3">
    <location>
        <begin position="1204"/>
        <end position="1216"/>
    </location>
</feature>
<feature type="zinc finger region" description="PHD-type" evidence="5">
    <location>
        <begin position="1476"/>
        <end position="1526"/>
    </location>
</feature>
<feature type="region of interest" description="Disordered" evidence="7">
    <location>
        <begin position="240"/>
        <end position="262"/>
    </location>
</feature>
<feature type="region of interest" description="Disordered" evidence="7">
    <location>
        <begin position="352"/>
        <end position="387"/>
    </location>
</feature>
<feature type="region of interest" description="Disordered" evidence="7">
    <location>
        <begin position="524"/>
        <end position="550"/>
    </location>
</feature>
<feature type="region of interest" description="Disordered" evidence="7">
    <location>
        <begin position="610"/>
        <end position="653"/>
    </location>
</feature>
<feature type="region of interest" description="Disordered" evidence="7">
    <location>
        <begin position="884"/>
        <end position="905"/>
    </location>
</feature>
<feature type="region of interest" description="Disordered" evidence="7">
    <location>
        <begin position="1013"/>
        <end position="1063"/>
    </location>
</feature>
<feature type="region of interest" description="Disordered" evidence="7">
    <location>
        <begin position="1088"/>
        <end position="1110"/>
    </location>
</feature>
<feature type="region of interest" description="Disordered" evidence="7">
    <location>
        <begin position="1123"/>
        <end position="1149"/>
    </location>
</feature>
<feature type="region of interest" description="Disordered" evidence="7">
    <location>
        <begin position="1549"/>
        <end position="1587"/>
    </location>
</feature>
<feature type="coiled-coil region" evidence="2">
    <location>
        <begin position="579"/>
        <end position="638"/>
    </location>
</feature>
<feature type="compositionally biased region" description="Polar residues" evidence="7">
    <location>
        <begin position="377"/>
        <end position="387"/>
    </location>
</feature>
<feature type="compositionally biased region" description="Basic and acidic residues" evidence="7">
    <location>
        <begin position="528"/>
        <end position="540"/>
    </location>
</feature>
<feature type="compositionally biased region" description="Basic and acidic residues" evidence="7">
    <location>
        <begin position="610"/>
        <end position="632"/>
    </location>
</feature>
<feature type="compositionally biased region" description="Basic and acidic residues" evidence="7">
    <location>
        <begin position="890"/>
        <end position="900"/>
    </location>
</feature>
<feature type="compositionally biased region" description="Polar residues" evidence="7">
    <location>
        <begin position="1023"/>
        <end position="1040"/>
    </location>
</feature>
<feature type="compositionally biased region" description="Polar residues" evidence="7">
    <location>
        <begin position="1051"/>
        <end position="1063"/>
    </location>
</feature>
<feature type="compositionally biased region" description="Low complexity" evidence="7">
    <location>
        <begin position="1091"/>
        <end position="1108"/>
    </location>
</feature>
<feature type="compositionally biased region" description="Polar residues" evidence="7">
    <location>
        <begin position="1124"/>
        <end position="1149"/>
    </location>
</feature>
<feature type="sequence conflict" description="In Ref. 1; AAN61105." evidence="8" ref="1">
    <original>L</original>
    <variation>Q</variation>
    <location>
        <position position="653"/>
    </location>
</feature>
<feature type="sequence conflict" description="In Ref. 1; AAN61105." evidence="8" ref="1">
    <original>E</original>
    <variation>K</variation>
    <location>
        <position position="661"/>
    </location>
</feature>
<feature type="sequence conflict" description="In Ref. 1; AAN61105." evidence="8" ref="1">
    <original>N</original>
    <variation>K</variation>
    <location>
        <position position="741"/>
    </location>
</feature>
<feature type="sequence conflict" description="In Ref. 1; AAN61105." evidence="8" ref="1">
    <original>E</original>
    <variation>Q</variation>
    <location>
        <position position="806"/>
    </location>
</feature>
<feature type="sequence conflict" description="In Ref. 1; AAN61105." evidence="8" ref="1">
    <original>D</original>
    <variation>Y</variation>
    <location>
        <position position="966"/>
    </location>
</feature>
<feature type="sequence conflict" description="In Ref. 1; AAN61105." evidence="8" ref="1">
    <original>R</original>
    <variation>P</variation>
    <location>
        <position position="1210"/>
    </location>
</feature>
<feature type="sequence conflict" description="In Ref. 1; AAN61105." evidence="8" ref="1">
    <original>H</original>
    <variation>Y</variation>
    <location>
        <position position="1268"/>
    </location>
</feature>
<protein>
    <recommendedName>
        <fullName>Bromodomain adjacent to zinc finger domain protein 2A</fullName>
    </recommendedName>
    <alternativeName>
        <fullName>Transcription termination factor I-interacting protein 5</fullName>
        <shortName>TTF-I-interacting protein 5</shortName>
        <shortName>Tip5</shortName>
    </alternativeName>
</protein>
<reference key="1">
    <citation type="submission" date="2002-08" db="EMBL/GenBank/DDBJ databases">
        <title>Molecular cloning and expression analysis of chromatin remodelling factor BAZ2A in Xenopus laevis.</title>
        <authorList>
            <person name="Ruzov A."/>
            <person name="Meehan R."/>
        </authorList>
    </citation>
    <scope>NUCLEOTIDE SEQUENCE [MRNA]</scope>
</reference>
<reference key="2">
    <citation type="submission" date="2008-11" db="EMBL/GenBank/DDBJ databases">
        <authorList>
            <consortium name="NIH - Xenopus Gene Collection (XGC) project"/>
        </authorList>
    </citation>
    <scope>NUCLEOTIDE SEQUENCE [LARGE SCALE MRNA]</scope>
    <source>
        <tissue>Oocyte</tissue>
    </source>
</reference>
<keyword id="KW-0103">Bromodomain</keyword>
<keyword id="KW-0156">Chromatin regulator</keyword>
<keyword id="KW-0175">Coiled coil</keyword>
<keyword id="KW-0238">DNA-binding</keyword>
<keyword id="KW-0479">Metal-binding</keyword>
<keyword id="KW-0539">Nucleus</keyword>
<keyword id="KW-1185">Reference proteome</keyword>
<keyword id="KW-0677">Repeat</keyword>
<keyword id="KW-0678">Repressor</keyword>
<keyword id="KW-0694">RNA-binding</keyword>
<keyword id="KW-0804">Transcription</keyword>
<keyword id="KW-0805">Transcription regulation</keyword>
<keyword id="KW-0862">Zinc</keyword>
<keyword id="KW-0863">Zinc-finger</keyword>
<name>BAZ2A_XENLA</name>
<sequence length="1698" mass="192095">METQNHLSCTGQTPLTNASGLKLLPQSVEPVYTNSTLTSFSQHGKVLNYDLPVNGLISPSLSNNAHGTLLSNEHITHNSASNNFDYLWKKPKSSVHKDSHVSNQFLVNGSTCPITNGPSIKRSPQETLGNCTSNQTASFNVSSHSVCSPNEANVKMVTAANGAHYGFYEASLPVSVSASNMQSVSGDNLVKERTVEENEAGATEERNHTPELAEALEPSDTQTDLNICEYKESVLDPVIQSTPNPLLPPDVSNLDDPSQLPSQLGDSHLLNEDSLEPFGADLIQDPISSTMYDLEELEVGSTKQKDPQLDTSSLDCPTYSLSAAFPLVAEDTNDSSVLFNASSASPVLGDSVMQESASEMGEDPEGSKAEEPVSGPENVSQDEMTIENTSPEPCVAAEHEEEELEPGEVKGTISRRRIATPEQVCFPLQHGWRREVRIKKGSHRWQGETWYYAPCGKRMKQFPEVIKYLSKNAGPFVRREHFSFSPRMPVGDFYEERNTAEGLQWVLLNSEEIPSRIIAITGKRGRPRNLEKAKAKEQKAKRGRGRPPKVKMIDLLSKADAKLLRKLENQDILSDSEKVQLCKLKKKMRRKARNQEAKLEAAKKLKEIKEKEEKKQKIQKAKNQEKAKNQEKKRTRRQPKQKAPVVQKPDRKLLAQQRRLEERKRQQFILEELKKPTEDMCLPDHQQLPDFPCVPGLFLPSCAFSDCLTTVEFLHSYGKVLGLDEAKDIPSLCTLQEGLFNVGDSLGEVQDLLVKLLQAAMINPGLPPYCQSLKILGEKVSEIVLSRENVSEPLRIFLEAYGGDIELCDSLRSHPFQAHAPHIKTAILAFIVNELNASSLIISEIDKTLENMSHYRKHKWIIEGKIRRLKFALSKRKSSEESQITTTEVSLRRRSERNAEENDELDSIDESAIQKDYVQEEVDIPPSTSVVELERQIEKLTKRQMFFRKKILGSSQRLRTVCLGQDRYRRCYWMLPHLGGIFIEGLPESAEPTEEAALGNDIEASSVKTEDKSFGSLCKTSGHPRNSTAEPEQNSTSCHCSDSKDKEPSGVTDQFPNSVPLTNNQQDLSQSVFLSWLTKNQTSIMDSTVLTPESSPPHSESTPIISSEATEKPEQWLPLISRTPCRNHNQGLSTHSSNRLSPPSPTAATSVKQVNEFTEEAQTFATSLPSNSTPCHVCYNSGKSSTASHEITLTSNILHDSEKEKRRGRRPSKLLKQIEQKYYNQLIERPIPAGVRQKWWWIKDPAMLESLLKALHPRGIREKTLHKHLTKHLQHLKEMCARPASDALFKFTPVDGHRVSQETLDRWSVTDLTFQVDLSALQWVEDLEQRVMLSDLQQRGWSPSAPDSVRTDLKYYEHQLEPADDITVKVKREDCRLYRESSNPLDLAVLRILCLEENVERKYLKEPLWLFSEVQHEKVVITNPEDPLSTTEIEYSITSRLRLWRQTVERCRSAAQLSLCLQQLERSIAWERSLNKVTCLYCRKGDNDELLLLCDSCDRGCHTYCHRPRMNEIPEGDWFCPTCISLQSESEFLRSSGSSKRIRKCTVRFTEDSPSKPSRRREHPTASQFSPGESPASKKRRMGTRSQSPDLTFCEIILMELESHEDAWPFLEPVNPRLVPGYRKIIKNPMDFSTMRHKLLNGNYSRCEEFAEDAELIFSNCQLFNEDESDVGKAGLILKKFYDARWEEFSQERNQISL</sequence>
<gene>
    <name type="primary">baz2a</name>
    <name type="synonym">tip5</name>
</gene>
<comment type="function">
    <text evidence="1">Essential component of the NoRC (nucleolar remodeling complex) complex, a complex that mediates silencing of a fraction of rDNA by recruiting histone-modifying enzymes and DNA methyltransferases, leading to heterochromatin formation and transcriptional silencing. In the complex, it plays a central role by being recruited to rDNA and by targeting chromatin modifying enzymes such as HDAC1, leading to repress RNA polymerase I transcription. Recruited to rDNA via its interaction with TTF1 and its ability to recognize and bind histone H4 acetylated on 'Lys-16' (H4K16ac), leading to deacetylation of H4K5ac, H4K8ac, H4K12ac but not H4K16ac. Specifically binds pRNAs, 150-250 nucleotide RNAs that are complementary in sequence to the rDNA promoter; pRNA-binding is required for heterochromatin formation and rDNA silencing (By similarity).</text>
</comment>
<comment type="subunit">
    <text evidence="1">Component of the NoRC complex, at least composed of SMARCA5/SNF2H and BAZ2A/TIP5.</text>
</comment>
<comment type="subcellular location">
    <subcellularLocation>
        <location evidence="1">Nucleus</location>
        <location evidence="1">Nucleolus</location>
    </subcellularLocation>
</comment>
<comment type="domain">
    <text evidence="1">The MBD (methyl-CpG-binding) domain, also named TAM domain, specifically recognizes and binds a conserved stem-loop structure the association within pRNA.</text>
</comment>
<comment type="similarity">
    <text evidence="8">Belongs to the WAL family.</text>
</comment>
<dbReference type="EMBL" id="AY145834">
    <property type="protein sequence ID" value="AAN61105.1"/>
    <property type="molecule type" value="mRNA"/>
</dbReference>
<dbReference type="EMBL" id="BC170384">
    <property type="protein sequence ID" value="AAI70384.1"/>
    <property type="molecule type" value="mRNA"/>
</dbReference>
<dbReference type="EMBL" id="BC170386">
    <property type="protein sequence ID" value="AAI70386.1"/>
    <property type="molecule type" value="mRNA"/>
</dbReference>
<dbReference type="RefSeq" id="NP_001082767.1">
    <property type="nucleotide sequence ID" value="NM_001089298.1"/>
</dbReference>
<dbReference type="SMR" id="B7ZS37"/>
<dbReference type="GeneID" id="398712"/>
<dbReference type="KEGG" id="xla:398712"/>
<dbReference type="AGR" id="Xenbase:XB-GENE-965905"/>
<dbReference type="CTD" id="398712"/>
<dbReference type="Xenbase" id="XB-GENE-965905">
    <property type="gene designation" value="baz2a.L"/>
</dbReference>
<dbReference type="OrthoDB" id="21449at2759"/>
<dbReference type="Proteomes" id="UP000186698">
    <property type="component" value="Chromosome 2L"/>
</dbReference>
<dbReference type="Bgee" id="398712">
    <property type="expression patterns" value="Expressed in egg cell and 19 other cell types or tissues"/>
</dbReference>
<dbReference type="GO" id="GO:0005677">
    <property type="term" value="C:chromatin silencing complex"/>
    <property type="evidence" value="ECO:0000250"/>
    <property type="project" value="UniProtKB"/>
</dbReference>
<dbReference type="GO" id="GO:0005730">
    <property type="term" value="C:nucleolus"/>
    <property type="evidence" value="ECO:0000250"/>
    <property type="project" value="UniProtKB"/>
</dbReference>
<dbReference type="GO" id="GO:0033553">
    <property type="term" value="C:rDNA heterochromatin"/>
    <property type="evidence" value="ECO:0000250"/>
    <property type="project" value="UniProtKB"/>
</dbReference>
<dbReference type="GO" id="GO:0003677">
    <property type="term" value="F:DNA binding"/>
    <property type="evidence" value="ECO:0007669"/>
    <property type="project" value="UniProtKB-KW"/>
</dbReference>
<dbReference type="GO" id="GO:0140046">
    <property type="term" value="F:histone H4K16ac reader activity"/>
    <property type="evidence" value="ECO:0000250"/>
    <property type="project" value="UniProtKB"/>
</dbReference>
<dbReference type="GO" id="GO:0003723">
    <property type="term" value="F:RNA binding"/>
    <property type="evidence" value="ECO:0000250"/>
    <property type="project" value="UniProtKB"/>
</dbReference>
<dbReference type="GO" id="GO:0008270">
    <property type="term" value="F:zinc ion binding"/>
    <property type="evidence" value="ECO:0007669"/>
    <property type="project" value="UniProtKB-KW"/>
</dbReference>
<dbReference type="GO" id="GO:0000183">
    <property type="term" value="P:rDNA heterochromatin formation"/>
    <property type="evidence" value="ECO:0000250"/>
    <property type="project" value="UniProtKB"/>
</dbReference>
<dbReference type="CDD" id="cd05503">
    <property type="entry name" value="Bromo_BAZ2A_B_like"/>
    <property type="match status" value="1"/>
</dbReference>
<dbReference type="CDD" id="cd01397">
    <property type="entry name" value="HAT_MBD"/>
    <property type="match status" value="1"/>
</dbReference>
<dbReference type="CDD" id="cd15629">
    <property type="entry name" value="PHD_BAZ2A"/>
    <property type="match status" value="1"/>
</dbReference>
<dbReference type="FunFam" id="3.30.40.10:FF:000199">
    <property type="entry name" value="Bromodomain adjacent to zinc finger domain 2B"/>
    <property type="match status" value="1"/>
</dbReference>
<dbReference type="FunFam" id="3.30.890.10:FF:000002">
    <property type="entry name" value="Bromodomain adjacent to zinc finger domain protein 2B"/>
    <property type="match status" value="1"/>
</dbReference>
<dbReference type="Gene3D" id="1.20.920.10">
    <property type="entry name" value="Bromodomain-like"/>
    <property type="match status" value="1"/>
</dbReference>
<dbReference type="Gene3D" id="3.30.890.10">
    <property type="entry name" value="Methyl-cpg-binding Protein 2, Chain A"/>
    <property type="match status" value="1"/>
</dbReference>
<dbReference type="Gene3D" id="3.30.40.10">
    <property type="entry name" value="Zinc/RING finger domain, C3HC4 (zinc finger)"/>
    <property type="match status" value="1"/>
</dbReference>
<dbReference type="InterPro" id="IPR037374">
    <property type="entry name" value="BAZ2A/B_Bromo"/>
</dbReference>
<dbReference type="InterPro" id="IPR001487">
    <property type="entry name" value="Bromodomain"/>
</dbReference>
<dbReference type="InterPro" id="IPR036427">
    <property type="entry name" value="Bromodomain-like_sf"/>
</dbReference>
<dbReference type="InterPro" id="IPR018359">
    <property type="entry name" value="Bromodomain_CS"/>
</dbReference>
<dbReference type="InterPro" id="IPR018501">
    <property type="entry name" value="DDT_dom"/>
</dbReference>
<dbReference type="InterPro" id="IPR016177">
    <property type="entry name" value="DNA-bd_dom_sf"/>
</dbReference>
<dbReference type="InterPro" id="IPR001739">
    <property type="entry name" value="Methyl_CpG_DNA-bd"/>
</dbReference>
<dbReference type="InterPro" id="IPR028940">
    <property type="entry name" value="PHD_BAZ2A"/>
</dbReference>
<dbReference type="InterPro" id="IPR028941">
    <property type="entry name" value="WHIM2_dom"/>
</dbReference>
<dbReference type="InterPro" id="IPR011011">
    <property type="entry name" value="Znf_FYVE_PHD"/>
</dbReference>
<dbReference type="InterPro" id="IPR001965">
    <property type="entry name" value="Znf_PHD"/>
</dbReference>
<dbReference type="InterPro" id="IPR019787">
    <property type="entry name" value="Znf_PHD-finger"/>
</dbReference>
<dbReference type="InterPro" id="IPR013083">
    <property type="entry name" value="Znf_RING/FYVE/PHD"/>
</dbReference>
<dbReference type="PANTHER" id="PTHR45915:SF5">
    <property type="entry name" value="BROMODOMAIN ADJACENT TO ZINC FINGER DOMAIN PROTEIN 2A"/>
    <property type="match status" value="1"/>
</dbReference>
<dbReference type="PANTHER" id="PTHR45915">
    <property type="entry name" value="TRANSCRIPTION INTERMEDIARY FACTOR"/>
    <property type="match status" value="1"/>
</dbReference>
<dbReference type="Pfam" id="PF00439">
    <property type="entry name" value="Bromodomain"/>
    <property type="match status" value="1"/>
</dbReference>
<dbReference type="Pfam" id="PF02791">
    <property type="entry name" value="DDT"/>
    <property type="match status" value="1"/>
</dbReference>
<dbReference type="Pfam" id="PF01429">
    <property type="entry name" value="MBD"/>
    <property type="match status" value="1"/>
</dbReference>
<dbReference type="Pfam" id="PF00628">
    <property type="entry name" value="PHD"/>
    <property type="match status" value="1"/>
</dbReference>
<dbReference type="Pfam" id="PF15613">
    <property type="entry name" value="WSD"/>
    <property type="match status" value="1"/>
</dbReference>
<dbReference type="PRINTS" id="PR00503">
    <property type="entry name" value="BROMODOMAIN"/>
</dbReference>
<dbReference type="SMART" id="SM00297">
    <property type="entry name" value="BROMO"/>
    <property type="match status" value="1"/>
</dbReference>
<dbReference type="SMART" id="SM00571">
    <property type="entry name" value="DDT"/>
    <property type="match status" value="1"/>
</dbReference>
<dbReference type="SMART" id="SM00391">
    <property type="entry name" value="MBD"/>
    <property type="match status" value="1"/>
</dbReference>
<dbReference type="SMART" id="SM00249">
    <property type="entry name" value="PHD"/>
    <property type="match status" value="1"/>
</dbReference>
<dbReference type="SUPFAM" id="SSF47370">
    <property type="entry name" value="Bromodomain"/>
    <property type="match status" value="1"/>
</dbReference>
<dbReference type="SUPFAM" id="SSF54171">
    <property type="entry name" value="DNA-binding domain"/>
    <property type="match status" value="1"/>
</dbReference>
<dbReference type="SUPFAM" id="SSF57903">
    <property type="entry name" value="FYVE/PHD zinc finger"/>
    <property type="match status" value="1"/>
</dbReference>
<dbReference type="PROSITE" id="PS00633">
    <property type="entry name" value="BROMODOMAIN_1"/>
    <property type="match status" value="1"/>
</dbReference>
<dbReference type="PROSITE" id="PS50014">
    <property type="entry name" value="BROMODOMAIN_2"/>
    <property type="match status" value="1"/>
</dbReference>
<dbReference type="PROSITE" id="PS50827">
    <property type="entry name" value="DDT"/>
    <property type="match status" value="1"/>
</dbReference>
<dbReference type="PROSITE" id="PS50982">
    <property type="entry name" value="MBD"/>
    <property type="match status" value="1"/>
</dbReference>
<dbReference type="PROSITE" id="PS50016">
    <property type="entry name" value="ZF_PHD_2"/>
    <property type="match status" value="1"/>
</dbReference>
<evidence type="ECO:0000250" key="1"/>
<evidence type="ECO:0000255" key="2"/>
<evidence type="ECO:0000255" key="3">
    <source>
        <dbReference type="PROSITE-ProRule" id="PRU00035"/>
    </source>
</evidence>
<evidence type="ECO:0000255" key="4">
    <source>
        <dbReference type="PROSITE-ProRule" id="PRU00063"/>
    </source>
</evidence>
<evidence type="ECO:0000255" key="5">
    <source>
        <dbReference type="PROSITE-ProRule" id="PRU00146"/>
    </source>
</evidence>
<evidence type="ECO:0000255" key="6">
    <source>
        <dbReference type="PROSITE-ProRule" id="PRU00338"/>
    </source>
</evidence>
<evidence type="ECO:0000256" key="7">
    <source>
        <dbReference type="SAM" id="MobiDB-lite"/>
    </source>
</evidence>
<evidence type="ECO:0000305" key="8"/>
<organism>
    <name type="scientific">Xenopus laevis</name>
    <name type="common">African clawed frog</name>
    <dbReference type="NCBI Taxonomy" id="8355"/>
    <lineage>
        <taxon>Eukaryota</taxon>
        <taxon>Metazoa</taxon>
        <taxon>Chordata</taxon>
        <taxon>Craniata</taxon>
        <taxon>Vertebrata</taxon>
        <taxon>Euteleostomi</taxon>
        <taxon>Amphibia</taxon>
        <taxon>Batrachia</taxon>
        <taxon>Anura</taxon>
        <taxon>Pipoidea</taxon>
        <taxon>Pipidae</taxon>
        <taxon>Xenopodinae</taxon>
        <taxon>Xenopus</taxon>
        <taxon>Xenopus</taxon>
    </lineage>
</organism>